<name>BIOD_RHIWR</name>
<organism>
    <name type="scientific">Rhizorhabdus wittichii (strain DSM 6014 / CCUG 31198 / JCM 15750 / NBRC 105917 / EY 4224 / RW1)</name>
    <name type="common">Sphingomonas wittichii</name>
    <dbReference type="NCBI Taxonomy" id="392499"/>
    <lineage>
        <taxon>Bacteria</taxon>
        <taxon>Pseudomonadati</taxon>
        <taxon>Pseudomonadota</taxon>
        <taxon>Alphaproteobacteria</taxon>
        <taxon>Sphingomonadales</taxon>
        <taxon>Sphingomonadaceae</taxon>
        <taxon>Rhizorhabdus</taxon>
    </lineage>
</organism>
<proteinExistence type="inferred from homology"/>
<reference key="1">
    <citation type="journal article" date="2010" name="J. Bacteriol.">
        <title>Genome sequence of the dioxin-mineralizing bacterium Sphingomonas wittichii RW1.</title>
        <authorList>
            <person name="Miller T.R."/>
            <person name="Delcher A.L."/>
            <person name="Salzberg S.L."/>
            <person name="Saunders E."/>
            <person name="Detter J.C."/>
            <person name="Halden R.U."/>
        </authorList>
    </citation>
    <scope>NUCLEOTIDE SEQUENCE [LARGE SCALE GENOMIC DNA]</scope>
    <source>
        <strain>DSM 6014 / CCUG 31198 / JCM 15750 / NBRC 105917 / EY 4224 / RW1</strain>
    </source>
</reference>
<feature type="chain" id="PRO_1000019567" description="ATP-dependent dethiobiotin synthetase BioD">
    <location>
        <begin position="1"/>
        <end position="209"/>
    </location>
</feature>
<feature type="active site" evidence="1">
    <location>
        <position position="33"/>
    </location>
</feature>
<feature type="binding site" evidence="1">
    <location>
        <begin position="13"/>
        <end position="18"/>
    </location>
    <ligand>
        <name>ATP</name>
        <dbReference type="ChEBI" id="CHEBI:30616"/>
    </ligand>
</feature>
<feature type="binding site" evidence="1">
    <location>
        <position position="17"/>
    </location>
    <ligand>
        <name>Mg(2+)</name>
        <dbReference type="ChEBI" id="CHEBI:18420"/>
    </ligand>
</feature>
<feature type="binding site" evidence="1">
    <location>
        <begin position="100"/>
        <end position="103"/>
    </location>
    <ligand>
        <name>ATP</name>
        <dbReference type="ChEBI" id="CHEBI:30616"/>
    </ligand>
</feature>
<feature type="binding site" evidence="1">
    <location>
        <position position="100"/>
    </location>
    <ligand>
        <name>Mg(2+)</name>
        <dbReference type="ChEBI" id="CHEBI:18420"/>
    </ligand>
</feature>
<feature type="binding site" evidence="1">
    <location>
        <begin position="184"/>
        <end position="186"/>
    </location>
    <ligand>
        <name>ATP</name>
        <dbReference type="ChEBI" id="CHEBI:30616"/>
    </ligand>
</feature>
<comment type="function">
    <text evidence="1">Catalyzes a mechanistically unusual reaction, the ATP-dependent insertion of CO2 between the N7 and N8 nitrogen atoms of 7,8-diaminopelargonic acid (DAPA, also called 7,8-diammoniononanoate) to form a ureido ring.</text>
</comment>
<comment type="catalytic activity">
    <reaction evidence="1">
        <text>(7R,8S)-7,8-diammoniononanoate + CO2 + ATP = (4R,5S)-dethiobiotin + ADP + phosphate + 3 H(+)</text>
        <dbReference type="Rhea" id="RHEA:15805"/>
        <dbReference type="ChEBI" id="CHEBI:15378"/>
        <dbReference type="ChEBI" id="CHEBI:16526"/>
        <dbReference type="ChEBI" id="CHEBI:30616"/>
        <dbReference type="ChEBI" id="CHEBI:43474"/>
        <dbReference type="ChEBI" id="CHEBI:149469"/>
        <dbReference type="ChEBI" id="CHEBI:149473"/>
        <dbReference type="ChEBI" id="CHEBI:456216"/>
        <dbReference type="EC" id="6.3.3.3"/>
    </reaction>
</comment>
<comment type="cofactor">
    <cofactor evidence="1">
        <name>Mg(2+)</name>
        <dbReference type="ChEBI" id="CHEBI:18420"/>
    </cofactor>
</comment>
<comment type="pathway">
    <text evidence="1">Cofactor biosynthesis; biotin biosynthesis; biotin from 7,8-diaminononanoate: step 1/2.</text>
</comment>
<comment type="subunit">
    <text evidence="1">Homodimer.</text>
</comment>
<comment type="subcellular location">
    <subcellularLocation>
        <location evidence="1">Cytoplasm</location>
    </subcellularLocation>
</comment>
<comment type="similarity">
    <text evidence="1">Belongs to the dethiobiotin synthetase family.</text>
</comment>
<protein>
    <recommendedName>
        <fullName evidence="1">ATP-dependent dethiobiotin synthetase BioD</fullName>
        <ecNumber evidence="1">6.3.3.3</ecNumber>
    </recommendedName>
    <alternativeName>
        <fullName evidence="1">DTB synthetase</fullName>
        <shortName evidence="1">DTBS</shortName>
    </alternativeName>
    <alternativeName>
        <fullName evidence="1">Dethiobiotin synthase</fullName>
    </alternativeName>
</protein>
<gene>
    <name evidence="1" type="primary">bioD</name>
    <name type="ordered locus">Swit_1255</name>
</gene>
<keyword id="KW-0067">ATP-binding</keyword>
<keyword id="KW-0093">Biotin biosynthesis</keyword>
<keyword id="KW-0963">Cytoplasm</keyword>
<keyword id="KW-0436">Ligase</keyword>
<keyword id="KW-0460">Magnesium</keyword>
<keyword id="KW-0479">Metal-binding</keyword>
<keyword id="KW-0547">Nucleotide-binding</keyword>
<keyword id="KW-1185">Reference proteome</keyword>
<sequence>MTRAIVVTATDTDVGKTVFSAGLAGLLDGCYWKPVQAGLADGTDSDTVRRLSGLPDDRILPEAYRLETPASPHHAAAIDNVVIDPALLAPPPCDRRLVIEGAGGLLVPLAGGLLFADIFAGWRFETVVVARTALGTINHSLLTIEALRARDIPILGIAFIGDPQEESERTIAAIGGVRRLGRLPRLDPLDAGTLAAAFAAAFSPEDFAP</sequence>
<evidence type="ECO:0000255" key="1">
    <source>
        <dbReference type="HAMAP-Rule" id="MF_00336"/>
    </source>
</evidence>
<dbReference type="EC" id="6.3.3.3" evidence="1"/>
<dbReference type="EMBL" id="CP000699">
    <property type="protein sequence ID" value="ABQ67620.1"/>
    <property type="molecule type" value="Genomic_DNA"/>
</dbReference>
<dbReference type="SMR" id="A5V5Q4"/>
<dbReference type="STRING" id="392499.Swit_1255"/>
<dbReference type="PaxDb" id="392499-Swit_1255"/>
<dbReference type="KEGG" id="swi:Swit_1255"/>
<dbReference type="eggNOG" id="COG0132">
    <property type="taxonomic scope" value="Bacteria"/>
</dbReference>
<dbReference type="HOGENOM" id="CLU_072551_2_0_5"/>
<dbReference type="OrthoDB" id="9802097at2"/>
<dbReference type="UniPathway" id="UPA00078">
    <property type="reaction ID" value="UER00161"/>
</dbReference>
<dbReference type="Proteomes" id="UP000001989">
    <property type="component" value="Chromosome"/>
</dbReference>
<dbReference type="GO" id="GO:0005829">
    <property type="term" value="C:cytosol"/>
    <property type="evidence" value="ECO:0007669"/>
    <property type="project" value="TreeGrafter"/>
</dbReference>
<dbReference type="GO" id="GO:0005524">
    <property type="term" value="F:ATP binding"/>
    <property type="evidence" value="ECO:0007669"/>
    <property type="project" value="UniProtKB-UniRule"/>
</dbReference>
<dbReference type="GO" id="GO:0004141">
    <property type="term" value="F:dethiobiotin synthase activity"/>
    <property type="evidence" value="ECO:0007669"/>
    <property type="project" value="UniProtKB-UniRule"/>
</dbReference>
<dbReference type="GO" id="GO:0000287">
    <property type="term" value="F:magnesium ion binding"/>
    <property type="evidence" value="ECO:0007669"/>
    <property type="project" value="UniProtKB-UniRule"/>
</dbReference>
<dbReference type="GO" id="GO:0009102">
    <property type="term" value="P:biotin biosynthetic process"/>
    <property type="evidence" value="ECO:0007669"/>
    <property type="project" value="UniProtKB-UniRule"/>
</dbReference>
<dbReference type="CDD" id="cd03109">
    <property type="entry name" value="DTBS"/>
    <property type="match status" value="1"/>
</dbReference>
<dbReference type="Gene3D" id="3.40.50.300">
    <property type="entry name" value="P-loop containing nucleotide triphosphate hydrolases"/>
    <property type="match status" value="1"/>
</dbReference>
<dbReference type="HAMAP" id="MF_00336">
    <property type="entry name" value="BioD"/>
    <property type="match status" value="1"/>
</dbReference>
<dbReference type="InterPro" id="IPR004472">
    <property type="entry name" value="DTB_synth_BioD"/>
</dbReference>
<dbReference type="InterPro" id="IPR027417">
    <property type="entry name" value="P-loop_NTPase"/>
</dbReference>
<dbReference type="NCBIfam" id="TIGR00347">
    <property type="entry name" value="bioD"/>
    <property type="match status" value="1"/>
</dbReference>
<dbReference type="PANTHER" id="PTHR43210:SF2">
    <property type="entry name" value="ATP-DEPENDENT DETHIOBIOTIN SYNTHETASE BIOD 2"/>
    <property type="match status" value="1"/>
</dbReference>
<dbReference type="PANTHER" id="PTHR43210">
    <property type="entry name" value="DETHIOBIOTIN SYNTHETASE"/>
    <property type="match status" value="1"/>
</dbReference>
<dbReference type="Pfam" id="PF13500">
    <property type="entry name" value="AAA_26"/>
    <property type="match status" value="1"/>
</dbReference>
<dbReference type="PIRSF" id="PIRSF006755">
    <property type="entry name" value="DTB_synth"/>
    <property type="match status" value="1"/>
</dbReference>
<dbReference type="SUPFAM" id="SSF52540">
    <property type="entry name" value="P-loop containing nucleoside triphosphate hydrolases"/>
    <property type="match status" value="1"/>
</dbReference>
<accession>A5V5Q4</accession>